<comment type="function">
    <text evidence="1">Allows the formation of correctly charged Gln-tRNA(Gln) through the transamidation of misacylated Glu-tRNA(Gln) in the mitochondria. The reaction takes place in the presence of glutamine and ATP through an activated gamma-phospho-Glu-tRNA(Gln).</text>
</comment>
<comment type="catalytic activity">
    <reaction evidence="1">
        <text>L-glutamyl-tRNA(Gln) + L-glutamine + ATP + H2O = L-glutaminyl-tRNA(Gln) + L-glutamate + ADP + phosphate + H(+)</text>
        <dbReference type="Rhea" id="RHEA:17521"/>
        <dbReference type="Rhea" id="RHEA-COMP:9681"/>
        <dbReference type="Rhea" id="RHEA-COMP:9684"/>
        <dbReference type="ChEBI" id="CHEBI:15377"/>
        <dbReference type="ChEBI" id="CHEBI:15378"/>
        <dbReference type="ChEBI" id="CHEBI:29985"/>
        <dbReference type="ChEBI" id="CHEBI:30616"/>
        <dbReference type="ChEBI" id="CHEBI:43474"/>
        <dbReference type="ChEBI" id="CHEBI:58359"/>
        <dbReference type="ChEBI" id="CHEBI:78520"/>
        <dbReference type="ChEBI" id="CHEBI:78521"/>
        <dbReference type="ChEBI" id="CHEBI:456216"/>
        <dbReference type="EC" id="6.3.5.7"/>
    </reaction>
</comment>
<comment type="subunit">
    <text evidence="1">Subunit of the heterotrimeric GatCAB amidotransferase (AdT) complex, composed of A, B and C subunits.</text>
</comment>
<comment type="subcellular location">
    <subcellularLocation>
        <location evidence="1">Mitochondrion</location>
    </subcellularLocation>
</comment>
<comment type="similarity">
    <text evidence="1">Belongs to the amidase family. GatA subfamily.</text>
</comment>
<keyword id="KW-0067">ATP-binding</keyword>
<keyword id="KW-0436">Ligase</keyword>
<keyword id="KW-0496">Mitochondrion</keyword>
<keyword id="KW-0547">Nucleotide-binding</keyword>
<keyword id="KW-0648">Protein biosynthesis</keyword>
<keyword id="KW-1185">Reference proteome</keyword>
<organism>
    <name type="scientific">Anopheles gambiae</name>
    <name type="common">African malaria mosquito</name>
    <dbReference type="NCBI Taxonomy" id="7165"/>
    <lineage>
        <taxon>Eukaryota</taxon>
        <taxon>Metazoa</taxon>
        <taxon>Ecdysozoa</taxon>
        <taxon>Arthropoda</taxon>
        <taxon>Hexapoda</taxon>
        <taxon>Insecta</taxon>
        <taxon>Pterygota</taxon>
        <taxon>Neoptera</taxon>
        <taxon>Endopterygota</taxon>
        <taxon>Diptera</taxon>
        <taxon>Nematocera</taxon>
        <taxon>Culicoidea</taxon>
        <taxon>Culicidae</taxon>
        <taxon>Anophelinae</taxon>
        <taxon>Anopheles</taxon>
    </lineage>
</organism>
<accession>Q7QH64</accession>
<dbReference type="EC" id="6.3.5.7" evidence="1"/>
<dbReference type="EMBL" id="AAAB01008817">
    <property type="protein sequence ID" value="EAA05381.3"/>
    <property type="molecule type" value="Genomic_DNA"/>
</dbReference>
<dbReference type="RefSeq" id="XP_309611.3">
    <property type="nucleotide sequence ID" value="XM_309611.4"/>
</dbReference>
<dbReference type="SMR" id="Q7QH64"/>
<dbReference type="FunCoup" id="Q7QH64">
    <property type="interactions" value="886"/>
</dbReference>
<dbReference type="STRING" id="7165.Q7QH64"/>
<dbReference type="PaxDb" id="7165-AGAP004057-PA"/>
<dbReference type="EnsemblMetazoa" id="AGAP004057-RA">
    <property type="protein sequence ID" value="AGAP004057-PA"/>
    <property type="gene ID" value="AGAP004057"/>
</dbReference>
<dbReference type="GeneID" id="1270907"/>
<dbReference type="KEGG" id="aga:1270907"/>
<dbReference type="CTD" id="42283"/>
<dbReference type="VEuPathDB" id="VectorBase:AGAMI1_007909"/>
<dbReference type="VEuPathDB" id="VectorBase:AGAP004057"/>
<dbReference type="eggNOG" id="KOG1211">
    <property type="taxonomic scope" value="Eukaryota"/>
</dbReference>
<dbReference type="HOGENOM" id="CLU_009600_7_6_1"/>
<dbReference type="InParanoid" id="Q7QH64"/>
<dbReference type="OMA" id="QPASYCG"/>
<dbReference type="PhylomeDB" id="Q7QH64"/>
<dbReference type="Proteomes" id="UP000007062">
    <property type="component" value="Chromosome 2R"/>
</dbReference>
<dbReference type="GO" id="GO:0030956">
    <property type="term" value="C:glutamyl-tRNA(Gln) amidotransferase complex"/>
    <property type="evidence" value="ECO:0000318"/>
    <property type="project" value="GO_Central"/>
</dbReference>
<dbReference type="GO" id="GO:0005739">
    <property type="term" value="C:mitochondrion"/>
    <property type="evidence" value="ECO:0000318"/>
    <property type="project" value="GO_Central"/>
</dbReference>
<dbReference type="GO" id="GO:0005524">
    <property type="term" value="F:ATP binding"/>
    <property type="evidence" value="ECO:0007669"/>
    <property type="project" value="UniProtKB-KW"/>
</dbReference>
<dbReference type="GO" id="GO:0050567">
    <property type="term" value="F:glutaminyl-tRNA synthase (glutamine-hydrolyzing) activity"/>
    <property type="evidence" value="ECO:0000318"/>
    <property type="project" value="GO_Central"/>
</dbReference>
<dbReference type="GO" id="GO:0070681">
    <property type="term" value="P:glutaminyl-tRNAGln biosynthesis via transamidation"/>
    <property type="evidence" value="ECO:0000318"/>
    <property type="project" value="GO_Central"/>
</dbReference>
<dbReference type="GO" id="GO:0032543">
    <property type="term" value="P:mitochondrial translation"/>
    <property type="evidence" value="ECO:0000318"/>
    <property type="project" value="GO_Central"/>
</dbReference>
<dbReference type="Gene3D" id="3.90.1300.10">
    <property type="entry name" value="Amidase signature (AS) domain"/>
    <property type="match status" value="1"/>
</dbReference>
<dbReference type="HAMAP" id="MF_00120">
    <property type="entry name" value="GatA"/>
    <property type="match status" value="1"/>
</dbReference>
<dbReference type="InterPro" id="IPR000120">
    <property type="entry name" value="Amidase"/>
</dbReference>
<dbReference type="InterPro" id="IPR023631">
    <property type="entry name" value="Amidase_dom"/>
</dbReference>
<dbReference type="InterPro" id="IPR036928">
    <property type="entry name" value="AS_sf"/>
</dbReference>
<dbReference type="InterPro" id="IPR004412">
    <property type="entry name" value="GatA"/>
</dbReference>
<dbReference type="NCBIfam" id="TIGR00132">
    <property type="entry name" value="gatA"/>
    <property type="match status" value="1"/>
</dbReference>
<dbReference type="PANTHER" id="PTHR11895:SF7">
    <property type="entry name" value="GLUTAMYL-TRNA(GLN) AMIDOTRANSFERASE SUBUNIT A, MITOCHONDRIAL"/>
    <property type="match status" value="1"/>
</dbReference>
<dbReference type="PANTHER" id="PTHR11895">
    <property type="entry name" value="TRANSAMIDASE"/>
    <property type="match status" value="1"/>
</dbReference>
<dbReference type="Pfam" id="PF01425">
    <property type="entry name" value="Amidase"/>
    <property type="match status" value="1"/>
</dbReference>
<dbReference type="SUPFAM" id="SSF75304">
    <property type="entry name" value="Amidase signature (AS) enzymes"/>
    <property type="match status" value="1"/>
</dbReference>
<proteinExistence type="inferred from homology"/>
<protein>
    <recommendedName>
        <fullName evidence="1">Glutamyl-tRNA(Gln) amidotransferase subunit A, mitochondrial</fullName>
        <shortName evidence="1">Glu-AdT subunit A</shortName>
        <ecNumber evidence="1">6.3.5.7</ecNumber>
    </recommendedName>
</protein>
<reference key="1">
    <citation type="journal article" date="2002" name="Science">
        <title>The genome sequence of the malaria mosquito Anopheles gambiae.</title>
        <authorList>
            <person name="Holt R.A."/>
            <person name="Subramanian G.M."/>
            <person name="Halpern A."/>
            <person name="Sutton G.G."/>
            <person name="Charlab R."/>
            <person name="Nusskern D.R."/>
            <person name="Wincker P."/>
            <person name="Clark A.G."/>
            <person name="Ribeiro J.M.C."/>
            <person name="Wides R."/>
            <person name="Salzberg S.L."/>
            <person name="Loftus B.J."/>
            <person name="Yandell M.D."/>
            <person name="Majoros W.H."/>
            <person name="Rusch D.B."/>
            <person name="Lai Z."/>
            <person name="Kraft C.L."/>
            <person name="Abril J.F."/>
            <person name="Anthouard V."/>
            <person name="Arensburger P."/>
            <person name="Atkinson P.W."/>
            <person name="Baden H."/>
            <person name="de Berardinis V."/>
            <person name="Baldwin D."/>
            <person name="Benes V."/>
            <person name="Biedler J."/>
            <person name="Blass C."/>
            <person name="Bolanos R."/>
            <person name="Boscus D."/>
            <person name="Barnstead M."/>
            <person name="Cai S."/>
            <person name="Center A."/>
            <person name="Chaturverdi K."/>
            <person name="Christophides G.K."/>
            <person name="Chrystal M.A.M."/>
            <person name="Clamp M."/>
            <person name="Cravchik A."/>
            <person name="Curwen V."/>
            <person name="Dana A."/>
            <person name="Delcher A."/>
            <person name="Dew I."/>
            <person name="Evans C.A."/>
            <person name="Flanigan M."/>
            <person name="Grundschober-Freimoser A."/>
            <person name="Friedli L."/>
            <person name="Gu Z."/>
            <person name="Guan P."/>
            <person name="Guigo R."/>
            <person name="Hillenmeyer M.E."/>
            <person name="Hladun S.L."/>
            <person name="Hogan J.R."/>
            <person name="Hong Y.S."/>
            <person name="Hoover J."/>
            <person name="Jaillon O."/>
            <person name="Ke Z."/>
            <person name="Kodira C.D."/>
            <person name="Kokoza E."/>
            <person name="Koutsos A."/>
            <person name="Letunic I."/>
            <person name="Levitsky A.A."/>
            <person name="Liang Y."/>
            <person name="Lin J.-J."/>
            <person name="Lobo N.F."/>
            <person name="Lopez J.R."/>
            <person name="Malek J.A."/>
            <person name="McIntosh T.C."/>
            <person name="Meister S."/>
            <person name="Miller J.R."/>
            <person name="Mobarry C."/>
            <person name="Mongin E."/>
            <person name="Murphy S.D."/>
            <person name="O'Brochta D.A."/>
            <person name="Pfannkoch C."/>
            <person name="Qi R."/>
            <person name="Regier M.A."/>
            <person name="Remington K."/>
            <person name="Shao H."/>
            <person name="Sharakhova M.V."/>
            <person name="Sitter C.D."/>
            <person name="Shetty J."/>
            <person name="Smith T.J."/>
            <person name="Strong R."/>
            <person name="Sun J."/>
            <person name="Thomasova D."/>
            <person name="Ton L.Q."/>
            <person name="Topalis P."/>
            <person name="Tu Z.J."/>
            <person name="Unger M.F."/>
            <person name="Walenz B."/>
            <person name="Wang A.H."/>
            <person name="Wang J."/>
            <person name="Wang M."/>
            <person name="Wang X."/>
            <person name="Woodford K.J."/>
            <person name="Wortman J.R."/>
            <person name="Wu M."/>
            <person name="Yao A."/>
            <person name="Zdobnov E.M."/>
            <person name="Zhang H."/>
            <person name="Zhao Q."/>
            <person name="Zhao S."/>
            <person name="Zhu S.C."/>
            <person name="Zhimulev I."/>
            <person name="Coluzzi M."/>
            <person name="della Torre A."/>
            <person name="Roth C.W."/>
            <person name="Louis C."/>
            <person name="Kalush F."/>
            <person name="Mural R.J."/>
            <person name="Myers E.W."/>
            <person name="Adams M.D."/>
            <person name="Smith H.O."/>
            <person name="Broder S."/>
            <person name="Gardner M.J."/>
            <person name="Fraser C.M."/>
            <person name="Birney E."/>
            <person name="Bork P."/>
            <person name="Brey P.T."/>
            <person name="Venter J.C."/>
            <person name="Weissenbach J."/>
            <person name="Kafatos F.C."/>
            <person name="Collins F.H."/>
            <person name="Hoffman S.L."/>
        </authorList>
    </citation>
    <scope>NUCLEOTIDE SEQUENCE [LARGE SCALE GENOMIC DNA]</scope>
    <source>
        <strain>PEST</strain>
    </source>
</reference>
<sequence>MNRLPLRARVLSECFRSKSLDPVAVVEHSLAQIESHKHLNAFVRVSSEKALEQAKQSKDRHDANSPKSILDGVTIAVKDNFCTKGIHTTCASRMLQNFIPTYDATVVERLQAHGAVIVGKTNLDQFGMGSGCIDSIFGPTRNNWSEDTNDDRFRIAGGSSGGSAVAVAAGLCYAALGSDTGGSTRNPASYCGIVGLKPTYGLVSRHGLIPLVNSMDVPGIMTRTVDDCASMLNAVAGPDVYDSTTVKRPFESIAPLEKQMSLKGVRIGIPIEYHCDGLEKEVLETWTVIADMLESAGATVKAVSLPNTASSIFVYSILNQCEVASNMSRYDGIEYGHRSQEDSSTEQLYARTRAEGFNGVVKNRILSGNYFLLRENYDKYFQKALKVRRLIADDFVRAFKEVDVLLTPTTLSEAPLYKDFVQSNNRDQCAVQDFCTQPANMAGIPAISIPIRLSSRQLPISLQLMGDHFTERNLLQVANWIEKQVDFVANYS</sequence>
<feature type="chain" id="PRO_0000413335" description="Glutamyl-tRNA(Gln) amidotransferase subunit A, mitochondrial">
    <location>
        <begin position="1"/>
        <end position="492"/>
    </location>
</feature>
<feature type="active site" description="Charge relay system" evidence="1">
    <location>
        <position position="78"/>
    </location>
</feature>
<feature type="active site" description="Charge relay system" evidence="1">
    <location>
        <position position="159"/>
    </location>
</feature>
<feature type="active site" description="Acyl-ester intermediate" evidence="1">
    <location>
        <position position="183"/>
    </location>
</feature>
<evidence type="ECO:0000255" key="1">
    <source>
        <dbReference type="HAMAP-Rule" id="MF_03150"/>
    </source>
</evidence>
<gene>
    <name evidence="1" type="primary">gatA</name>
    <name type="ORF">AGAP004057</name>
</gene>
<name>GATA_ANOGA</name>